<gene>
    <name type="primary">fabI</name>
    <name type="synonym">envM</name>
    <name type="ordered locus">slr1051</name>
</gene>
<accession>P73016</accession>
<dbReference type="EC" id="1.3.1.9"/>
<dbReference type="EMBL" id="BA000022">
    <property type="protein sequence ID" value="BAA17036.1"/>
    <property type="status" value="ALT_INIT"/>
    <property type="molecule type" value="Genomic_DNA"/>
</dbReference>
<dbReference type="PIR" id="S74996">
    <property type="entry name" value="S74996"/>
</dbReference>
<dbReference type="SMR" id="P73016"/>
<dbReference type="FunCoup" id="P73016">
    <property type="interactions" value="365"/>
</dbReference>
<dbReference type="STRING" id="1148.gene:10497897"/>
<dbReference type="PaxDb" id="1148-1652111"/>
<dbReference type="EnsemblBacteria" id="BAA17036">
    <property type="protein sequence ID" value="BAA17036"/>
    <property type="gene ID" value="BAA17036"/>
</dbReference>
<dbReference type="KEGG" id="syn:slr1051"/>
<dbReference type="eggNOG" id="COG0623">
    <property type="taxonomic scope" value="Bacteria"/>
</dbReference>
<dbReference type="InParanoid" id="P73016"/>
<dbReference type="PhylomeDB" id="P73016"/>
<dbReference type="UniPathway" id="UPA00094"/>
<dbReference type="Proteomes" id="UP000001425">
    <property type="component" value="Chromosome"/>
</dbReference>
<dbReference type="GO" id="GO:0004318">
    <property type="term" value="F:enoyl-[acyl-carrier-protein] reductase (NADH) activity"/>
    <property type="evidence" value="ECO:0000250"/>
    <property type="project" value="UniProtKB"/>
</dbReference>
<dbReference type="GO" id="GO:0042802">
    <property type="term" value="F:identical protein binding"/>
    <property type="evidence" value="ECO:0000250"/>
    <property type="project" value="UniProtKB"/>
</dbReference>
<dbReference type="GO" id="GO:0030497">
    <property type="term" value="P:fatty acid elongation"/>
    <property type="evidence" value="ECO:0000250"/>
    <property type="project" value="UniProtKB"/>
</dbReference>
<dbReference type="CDD" id="cd05372">
    <property type="entry name" value="ENR_SDR"/>
    <property type="match status" value="1"/>
</dbReference>
<dbReference type="FunFam" id="1.10.8.400:FF:000001">
    <property type="entry name" value="Enoyl-[acyl-carrier-protein] reductase [NADH]"/>
    <property type="match status" value="1"/>
</dbReference>
<dbReference type="FunFam" id="3.40.50.720:FF:000169">
    <property type="entry name" value="Enoyl-[acyl-carrier-protein] reductase [NADH]"/>
    <property type="match status" value="1"/>
</dbReference>
<dbReference type="Gene3D" id="1.10.8.400">
    <property type="entry name" value="Enoyl acyl carrier protein reductase"/>
    <property type="match status" value="1"/>
</dbReference>
<dbReference type="Gene3D" id="3.40.50.720">
    <property type="entry name" value="NAD(P)-binding Rossmann-like Domain"/>
    <property type="match status" value="1"/>
</dbReference>
<dbReference type="InterPro" id="IPR014358">
    <property type="entry name" value="Enoyl-ACP_Rdtase_NADH"/>
</dbReference>
<dbReference type="InterPro" id="IPR036291">
    <property type="entry name" value="NAD(P)-bd_dom_sf"/>
</dbReference>
<dbReference type="InterPro" id="IPR002347">
    <property type="entry name" value="SDR_fam"/>
</dbReference>
<dbReference type="NCBIfam" id="NF005615">
    <property type="entry name" value="PRK07370.1"/>
    <property type="match status" value="1"/>
</dbReference>
<dbReference type="PANTHER" id="PTHR43159">
    <property type="entry name" value="ENOYL-[ACYL-CARRIER-PROTEIN] REDUCTASE"/>
    <property type="match status" value="1"/>
</dbReference>
<dbReference type="PANTHER" id="PTHR43159:SF2">
    <property type="entry name" value="ENOYL-[ACYL-CARRIER-PROTEIN] REDUCTASE [NADH], CHLOROPLASTIC"/>
    <property type="match status" value="1"/>
</dbReference>
<dbReference type="Pfam" id="PF13561">
    <property type="entry name" value="adh_short_C2"/>
    <property type="match status" value="1"/>
</dbReference>
<dbReference type="PIRSF" id="PIRSF000094">
    <property type="entry name" value="Enoyl-ACP_rdct"/>
    <property type="match status" value="1"/>
</dbReference>
<dbReference type="PRINTS" id="PR00081">
    <property type="entry name" value="GDHRDH"/>
</dbReference>
<dbReference type="SUPFAM" id="SSF51735">
    <property type="entry name" value="NAD(P)-binding Rossmann-fold domains"/>
    <property type="match status" value="1"/>
</dbReference>
<sequence length="258" mass="27626">MLDLSGKHAFVTGIANNRSIAWGIAQQLHQAGAEIGVSYLPDEKGRFEKKVRELTEPLHPTLVLPGDVQDDAQVDALFHSVKEKWGKLDILIHCLAFADKSGLTGNYTDIPKEAFSQAMEISTYSLGRLARGAKPLMTNGGSIITLTYFGGVKVIPNYNLMGVAKAGLEMTVRYLAAELGPQNIRVNGISAGPIRTLASSAVGGILDMIHHVEEVAPLKRTVTQTEVGNTAAFLASDLSSGITGQIIYVDSGYEIMGM</sequence>
<protein>
    <recommendedName>
        <fullName>Enoyl-[acyl-carrier-protein] reductase [NADH] FabI</fullName>
        <shortName>ENR</shortName>
        <ecNumber>1.3.1.9</ecNumber>
    </recommendedName>
    <alternativeName>
        <fullName>NADH-dependent enoyl-ACP reductase</fullName>
    </alternativeName>
</protein>
<evidence type="ECO:0000250" key="1"/>
<evidence type="ECO:0000305" key="2"/>
<proteinExistence type="inferred from homology"/>
<feature type="chain" id="PRO_0000054912" description="Enoyl-[acyl-carrier-protein] reductase [NADH] FabI">
    <location>
        <begin position="1"/>
        <end position="258"/>
    </location>
</feature>
<feature type="active site" description="Proton acceptor" evidence="1">
    <location>
        <position position="148"/>
    </location>
</feature>
<feature type="active site" description="Proton acceptor" evidence="1">
    <location>
        <position position="158"/>
    </location>
</feature>
<feature type="binding site" evidence="1">
    <location>
        <position position="13"/>
    </location>
    <ligand>
        <name>NAD(+)</name>
        <dbReference type="ChEBI" id="CHEBI:57540"/>
    </ligand>
</feature>
<feature type="binding site" evidence="1">
    <location>
        <begin position="19"/>
        <end position="20"/>
    </location>
    <ligand>
        <name>NAD(+)</name>
        <dbReference type="ChEBI" id="CHEBI:57540"/>
    </ligand>
</feature>
<feature type="binding site" evidence="1">
    <location>
        <begin position="67"/>
        <end position="68"/>
    </location>
    <ligand>
        <name>NAD(+)</name>
        <dbReference type="ChEBI" id="CHEBI:57540"/>
    </ligand>
</feature>
<feature type="binding site" evidence="1">
    <location>
        <position position="95"/>
    </location>
    <ligand>
        <name>NAD(+)</name>
        <dbReference type="ChEBI" id="CHEBI:57540"/>
    </ligand>
</feature>
<feature type="binding site" evidence="1">
    <location>
        <position position="98"/>
    </location>
    <ligand>
        <name>substrate</name>
    </ligand>
</feature>
<feature type="binding site" evidence="1">
    <location>
        <position position="165"/>
    </location>
    <ligand>
        <name>NAD(+)</name>
        <dbReference type="ChEBI" id="CHEBI:57540"/>
    </ligand>
</feature>
<feature type="binding site" evidence="1">
    <location>
        <begin position="194"/>
        <end position="198"/>
    </location>
    <ligand>
        <name>NAD(+)</name>
        <dbReference type="ChEBI" id="CHEBI:57540"/>
    </ligand>
</feature>
<organism>
    <name type="scientific">Synechocystis sp. (strain ATCC 27184 / PCC 6803 / Kazusa)</name>
    <dbReference type="NCBI Taxonomy" id="1111708"/>
    <lineage>
        <taxon>Bacteria</taxon>
        <taxon>Bacillati</taxon>
        <taxon>Cyanobacteriota</taxon>
        <taxon>Cyanophyceae</taxon>
        <taxon>Synechococcales</taxon>
        <taxon>Merismopediaceae</taxon>
        <taxon>Synechocystis</taxon>
    </lineage>
</organism>
<comment type="function">
    <text evidence="1">Catalyzes the reduction of a carbon-carbon double bond in an enoyl moiety that is covalently linked to an acyl carrier protein (ACP). Involved in the elongation cycle of fatty acid which are used in the lipid metabolism (By similarity).</text>
</comment>
<comment type="catalytic activity">
    <reaction>
        <text>a 2,3-saturated acyl-[ACP] + NAD(+) = a (2E)-enoyl-[ACP] + NADH + H(+)</text>
        <dbReference type="Rhea" id="RHEA:10240"/>
        <dbReference type="Rhea" id="RHEA-COMP:9925"/>
        <dbReference type="Rhea" id="RHEA-COMP:9926"/>
        <dbReference type="ChEBI" id="CHEBI:15378"/>
        <dbReference type="ChEBI" id="CHEBI:57540"/>
        <dbReference type="ChEBI" id="CHEBI:57945"/>
        <dbReference type="ChEBI" id="CHEBI:78784"/>
        <dbReference type="ChEBI" id="CHEBI:78785"/>
        <dbReference type="EC" id="1.3.1.9"/>
    </reaction>
</comment>
<comment type="pathway">
    <text>Lipid metabolism; fatty acid biosynthesis.</text>
</comment>
<comment type="subunit">
    <text evidence="1">Homotetramer.</text>
</comment>
<comment type="similarity">
    <text evidence="2">Belongs to the short-chain dehydrogenases/reductases (SDR) family. FabI subfamily.</text>
</comment>
<comment type="sequence caution" evidence="2">
    <conflict type="erroneous initiation">
        <sequence resource="EMBL-CDS" id="BAA17036"/>
    </conflict>
    <text>Extended N-terminus.</text>
</comment>
<keyword id="KW-0275">Fatty acid biosynthesis</keyword>
<keyword id="KW-0276">Fatty acid metabolism</keyword>
<keyword id="KW-0444">Lipid biosynthesis</keyword>
<keyword id="KW-0443">Lipid metabolism</keyword>
<keyword id="KW-0520">NAD</keyword>
<keyword id="KW-0560">Oxidoreductase</keyword>
<keyword id="KW-1185">Reference proteome</keyword>
<name>FABI_SYNY3</name>
<reference key="1">
    <citation type="journal article" date="1996" name="DNA Res.">
        <title>Sequence analysis of the genome of the unicellular cyanobacterium Synechocystis sp. strain PCC6803. II. Sequence determination of the entire genome and assignment of potential protein-coding regions.</title>
        <authorList>
            <person name="Kaneko T."/>
            <person name="Sato S."/>
            <person name="Kotani H."/>
            <person name="Tanaka A."/>
            <person name="Asamizu E."/>
            <person name="Nakamura Y."/>
            <person name="Miyajima N."/>
            <person name="Hirosawa M."/>
            <person name="Sugiura M."/>
            <person name="Sasamoto S."/>
            <person name="Kimura T."/>
            <person name="Hosouchi T."/>
            <person name="Matsuno A."/>
            <person name="Muraki A."/>
            <person name="Nakazaki N."/>
            <person name="Naruo K."/>
            <person name="Okumura S."/>
            <person name="Shimpo S."/>
            <person name="Takeuchi C."/>
            <person name="Wada T."/>
            <person name="Watanabe A."/>
            <person name="Yamada M."/>
            <person name="Yasuda M."/>
            <person name="Tabata S."/>
        </authorList>
    </citation>
    <scope>NUCLEOTIDE SEQUENCE [LARGE SCALE GENOMIC DNA]</scope>
    <source>
        <strain>ATCC 27184 / PCC 6803 / Kazusa</strain>
    </source>
</reference>